<proteinExistence type="evidence at protein level"/>
<dbReference type="EC" id="7.2.2.17" evidence="7"/>
<dbReference type="EMBL" id="X57471">
    <property type="protein sequence ID" value="CAA40709.1"/>
    <property type="molecule type" value="Genomic_DNA"/>
</dbReference>
<dbReference type="EMBL" id="U82598">
    <property type="protein sequence ID" value="AAB40787.1"/>
    <property type="status" value="ALT_INIT"/>
    <property type="molecule type" value="Genomic_DNA"/>
</dbReference>
<dbReference type="EMBL" id="U00096">
    <property type="protein sequence ID" value="AAC73689.1"/>
    <property type="molecule type" value="Genomic_DNA"/>
</dbReference>
<dbReference type="EMBL" id="AP009048">
    <property type="protein sequence ID" value="BAE76343.1"/>
    <property type="molecule type" value="Genomic_DNA"/>
</dbReference>
<dbReference type="PIR" id="B64792">
    <property type="entry name" value="B64792"/>
</dbReference>
<dbReference type="RefSeq" id="NP_415120.1">
    <property type="nucleotide sequence ID" value="NC_000913.3"/>
</dbReference>
<dbReference type="RefSeq" id="WP_000140647.1">
    <property type="nucleotide sequence ID" value="NZ_STEB01000047.1"/>
</dbReference>
<dbReference type="SMR" id="P23878"/>
<dbReference type="BioGRID" id="4259899">
    <property type="interactions" value="394"/>
</dbReference>
<dbReference type="BioGRID" id="849587">
    <property type="interactions" value="2"/>
</dbReference>
<dbReference type="ComplexPortal" id="CPX-4404">
    <property type="entry name" value="Ferric-enterobactin ABC transporter complex"/>
</dbReference>
<dbReference type="FunCoup" id="P23878">
    <property type="interactions" value="656"/>
</dbReference>
<dbReference type="IntAct" id="P23878">
    <property type="interactions" value="14"/>
</dbReference>
<dbReference type="STRING" id="511145.b0588"/>
<dbReference type="TCDB" id="3.A.1.14.2">
    <property type="family name" value="the atp-binding cassette (abc) superfamily"/>
</dbReference>
<dbReference type="PaxDb" id="511145-b0588"/>
<dbReference type="EnsemblBacteria" id="AAC73689">
    <property type="protein sequence ID" value="AAC73689"/>
    <property type="gene ID" value="b0588"/>
</dbReference>
<dbReference type="GeneID" id="75170592"/>
<dbReference type="GeneID" id="945201"/>
<dbReference type="KEGG" id="ecj:JW0580"/>
<dbReference type="KEGG" id="eco:b0588"/>
<dbReference type="KEGG" id="ecoc:C3026_02935"/>
<dbReference type="PATRIC" id="fig|1411691.4.peg.1681"/>
<dbReference type="EchoBASE" id="EB0291"/>
<dbReference type="eggNOG" id="COG1120">
    <property type="taxonomic scope" value="Bacteria"/>
</dbReference>
<dbReference type="HOGENOM" id="CLU_000604_1_11_6"/>
<dbReference type="InParanoid" id="P23878"/>
<dbReference type="OMA" id="MNCQVTQ"/>
<dbReference type="OrthoDB" id="5292475at2"/>
<dbReference type="PhylomeDB" id="P23878"/>
<dbReference type="BioCyc" id="EcoCyc:FEPC-MONOMER"/>
<dbReference type="BioCyc" id="MetaCyc:FEPC-MONOMER"/>
<dbReference type="PRO" id="PR:P23878"/>
<dbReference type="Proteomes" id="UP000000625">
    <property type="component" value="Chromosome"/>
</dbReference>
<dbReference type="GO" id="GO:0055052">
    <property type="term" value="C:ATP-binding cassette (ABC) transporter complex, substrate-binding subunit-containing"/>
    <property type="evidence" value="ECO:0000303"/>
    <property type="project" value="ComplexPortal"/>
</dbReference>
<dbReference type="GO" id="GO:0016020">
    <property type="term" value="C:membrane"/>
    <property type="evidence" value="ECO:0000303"/>
    <property type="project" value="ComplexPortal"/>
</dbReference>
<dbReference type="GO" id="GO:0005886">
    <property type="term" value="C:plasma membrane"/>
    <property type="evidence" value="ECO:0000314"/>
    <property type="project" value="EcoCyc"/>
</dbReference>
<dbReference type="GO" id="GO:0005524">
    <property type="term" value="F:ATP binding"/>
    <property type="evidence" value="ECO:0000255"/>
    <property type="project" value="EcoCyc"/>
</dbReference>
<dbReference type="GO" id="GO:0016887">
    <property type="term" value="F:ATP hydrolysis activity"/>
    <property type="evidence" value="ECO:0007669"/>
    <property type="project" value="InterPro"/>
</dbReference>
<dbReference type="GO" id="GO:0015620">
    <property type="term" value="F:ferric-enterobactin transmembrane transporter activity"/>
    <property type="evidence" value="ECO:0000315"/>
    <property type="project" value="EcoCyc"/>
</dbReference>
<dbReference type="GO" id="GO:0015685">
    <property type="term" value="P:ferric-enterobactin import into cell"/>
    <property type="evidence" value="ECO:0000315"/>
    <property type="project" value="EcoCyc"/>
</dbReference>
<dbReference type="GO" id="GO:0033212">
    <property type="term" value="P:iron import into cell"/>
    <property type="evidence" value="ECO:0000303"/>
    <property type="project" value="ComplexPortal"/>
</dbReference>
<dbReference type="CDD" id="cd03214">
    <property type="entry name" value="ABC_Iron-Siderophores_B12_Hemin"/>
    <property type="match status" value="1"/>
</dbReference>
<dbReference type="FunFam" id="3.40.50.300:FF:000134">
    <property type="entry name" value="Iron-enterobactin ABC transporter ATP-binding protein"/>
    <property type="match status" value="1"/>
</dbReference>
<dbReference type="Gene3D" id="3.40.50.300">
    <property type="entry name" value="P-loop containing nucleotide triphosphate hydrolases"/>
    <property type="match status" value="1"/>
</dbReference>
<dbReference type="InterPro" id="IPR003593">
    <property type="entry name" value="AAA+_ATPase"/>
</dbReference>
<dbReference type="InterPro" id="IPR003439">
    <property type="entry name" value="ABC_transporter-like_ATP-bd"/>
</dbReference>
<dbReference type="InterPro" id="IPR017871">
    <property type="entry name" value="ABC_transporter-like_CS"/>
</dbReference>
<dbReference type="InterPro" id="IPR027417">
    <property type="entry name" value="P-loop_NTPase"/>
</dbReference>
<dbReference type="InterPro" id="IPR051535">
    <property type="entry name" value="Siderophore_ABC-ATPase"/>
</dbReference>
<dbReference type="NCBIfam" id="NF007606">
    <property type="entry name" value="PRK10253.1"/>
    <property type="match status" value="1"/>
</dbReference>
<dbReference type="PANTHER" id="PTHR42771:SF12">
    <property type="entry name" value="FE(3+) DICITRATE TRANSPORT ATP-BINDING PROTEIN FECE-RELATED"/>
    <property type="match status" value="1"/>
</dbReference>
<dbReference type="PANTHER" id="PTHR42771">
    <property type="entry name" value="IRON(3+)-HYDROXAMATE IMPORT ATP-BINDING PROTEIN FHUC"/>
    <property type="match status" value="1"/>
</dbReference>
<dbReference type="Pfam" id="PF00005">
    <property type="entry name" value="ABC_tran"/>
    <property type="match status" value="1"/>
</dbReference>
<dbReference type="SMART" id="SM00382">
    <property type="entry name" value="AAA"/>
    <property type="match status" value="1"/>
</dbReference>
<dbReference type="SUPFAM" id="SSF52540">
    <property type="entry name" value="P-loop containing nucleoside triphosphate hydrolases"/>
    <property type="match status" value="1"/>
</dbReference>
<dbReference type="PROSITE" id="PS00211">
    <property type="entry name" value="ABC_TRANSPORTER_1"/>
    <property type="match status" value="1"/>
</dbReference>
<dbReference type="PROSITE" id="PS50893">
    <property type="entry name" value="ABC_TRANSPORTER_2"/>
    <property type="match status" value="1"/>
</dbReference>
<accession>P23878</accession>
<accession>P75724</accession>
<accession>P77096</accession>
<accession>Q2MBL3</accession>
<gene>
    <name type="primary">fepC</name>
    <name type="ordered locus">b0588</name>
    <name type="ordered locus">JW0580</name>
</gene>
<reference key="1">
    <citation type="journal article" date="1991" name="Mol. Microbiol.">
        <title>Nucleotide sequence and genetic organization of the ferric enterobactin transport system: homology to other periplasmic binding protein-dependent systems in Escherichia coli.</title>
        <authorList>
            <person name="Shea C.M."/>
            <person name="McIntosh M.A."/>
        </authorList>
    </citation>
    <scope>NUCLEOTIDE SEQUENCE [GENOMIC DNA]</scope>
    <scope>FUNCTION</scope>
    <scope>INDUCTION</scope>
    <source>
        <strain>K12</strain>
    </source>
</reference>
<reference key="2">
    <citation type="submission" date="1997-01" db="EMBL/GenBank/DDBJ databases">
        <title>Sequence of minutes 4-25 of Escherichia coli.</title>
        <authorList>
            <person name="Chung E."/>
            <person name="Allen E."/>
            <person name="Araujo R."/>
            <person name="Aparicio A.M."/>
            <person name="Davis K."/>
            <person name="Duncan M."/>
            <person name="Federspiel N."/>
            <person name="Hyman R."/>
            <person name="Kalman S."/>
            <person name="Komp C."/>
            <person name="Kurdi O."/>
            <person name="Lew H."/>
            <person name="Lin D."/>
            <person name="Namath A."/>
            <person name="Oefner P."/>
            <person name="Roberts D."/>
            <person name="Schramm S."/>
            <person name="Davis R.W."/>
        </authorList>
    </citation>
    <scope>NUCLEOTIDE SEQUENCE [LARGE SCALE GENOMIC DNA]</scope>
    <source>
        <strain>K12 / MG1655 / ATCC 47076</strain>
    </source>
</reference>
<reference key="3">
    <citation type="journal article" date="1997" name="Science">
        <title>The complete genome sequence of Escherichia coli K-12.</title>
        <authorList>
            <person name="Blattner F.R."/>
            <person name="Plunkett G. III"/>
            <person name="Bloch C.A."/>
            <person name="Perna N.T."/>
            <person name="Burland V."/>
            <person name="Riley M."/>
            <person name="Collado-Vides J."/>
            <person name="Glasner J.D."/>
            <person name="Rode C.K."/>
            <person name="Mayhew G.F."/>
            <person name="Gregor J."/>
            <person name="Davis N.W."/>
            <person name="Kirkpatrick H.A."/>
            <person name="Goeden M.A."/>
            <person name="Rose D.J."/>
            <person name="Mau B."/>
            <person name="Shao Y."/>
        </authorList>
    </citation>
    <scope>NUCLEOTIDE SEQUENCE [LARGE SCALE GENOMIC DNA]</scope>
    <source>
        <strain>K12 / MG1655 / ATCC 47076</strain>
    </source>
</reference>
<reference key="4">
    <citation type="journal article" date="2006" name="Mol. Syst. Biol.">
        <title>Highly accurate genome sequences of Escherichia coli K-12 strains MG1655 and W3110.</title>
        <authorList>
            <person name="Hayashi K."/>
            <person name="Morooka N."/>
            <person name="Yamamoto Y."/>
            <person name="Fujita K."/>
            <person name="Isono K."/>
            <person name="Choi S."/>
            <person name="Ohtsubo E."/>
            <person name="Baba T."/>
            <person name="Wanner B.L."/>
            <person name="Mori H."/>
            <person name="Horiuchi T."/>
        </authorList>
    </citation>
    <scope>NUCLEOTIDE SEQUENCE [LARGE SCALE GENOMIC DNA]</scope>
    <source>
        <strain>K12 / W3110 / ATCC 27325 / DSM 5911</strain>
    </source>
</reference>
<reference key="5">
    <citation type="journal article" date="1986" name="J. Bacteriol.">
        <title>Escherichia coli K-12 envelope proteins specifically required for ferrienterobactin uptake.</title>
        <authorList>
            <person name="Pierce J.R."/>
            <person name="Earhart C.F."/>
        </authorList>
    </citation>
    <scope>FUNCTION</scope>
    <scope>SUBCELLULAR LOCATION</scope>
    <source>
        <strain>K12</strain>
    </source>
</reference>
<reference key="6">
    <citation type="journal article" date="1992" name="J. Gen. Microbiol.">
        <title>Identification of hydrophobic proteins FepD and FepG of the Escherichia coli ferrienterobactin permease.</title>
        <authorList>
            <person name="Chenault S.S."/>
            <person name="Earhart C.F."/>
        </authorList>
    </citation>
    <scope>SUBUNIT</scope>
</reference>
<reference key="7">
    <citation type="journal article" date="2009" name="Mol. Cell">
        <title>Hydroxyurea induces hydroxyl radical-mediated cell death in Escherichia coli.</title>
        <authorList>
            <person name="Davies B.W."/>
            <person name="Kohanski M.A."/>
            <person name="Simmons L.A."/>
            <person name="Winkler J.A."/>
            <person name="Collins J.J."/>
            <person name="Walker G.C."/>
        </authorList>
    </citation>
    <scope>INDUCTION BY HYDROXYUREA</scope>
    <source>
        <strain>K12 / MC4100 / ATCC 35695 / DSM 6574</strain>
    </source>
</reference>
<keyword id="KW-0067">ATP-binding</keyword>
<keyword id="KW-0997">Cell inner membrane</keyword>
<keyword id="KW-1003">Cell membrane</keyword>
<keyword id="KW-0406">Ion transport</keyword>
<keyword id="KW-0408">Iron</keyword>
<keyword id="KW-0410">Iron transport</keyword>
<keyword id="KW-0472">Membrane</keyword>
<keyword id="KW-0547">Nucleotide-binding</keyword>
<keyword id="KW-1185">Reference proteome</keyword>
<keyword id="KW-1278">Translocase</keyword>
<keyword id="KW-0813">Transport</keyword>
<feature type="chain" id="PRO_0000092325" description="Ferric enterobactin transport ATP-binding protein FepC">
    <location>
        <begin position="1"/>
        <end position="271"/>
    </location>
</feature>
<feature type="domain" description="ABC transporter" evidence="1">
    <location>
        <begin position="8"/>
        <end position="244"/>
    </location>
</feature>
<feature type="binding site" evidence="1">
    <location>
        <begin position="40"/>
        <end position="47"/>
    </location>
    <ligand>
        <name>ATP</name>
        <dbReference type="ChEBI" id="CHEBI:30616"/>
    </ligand>
</feature>
<feature type="sequence conflict" description="In Ref. 1; CAA40709." evidence="5" ref="1">
    <original>A</original>
    <variation>R</variation>
    <location>
        <position position="227"/>
    </location>
</feature>
<sequence>MTESVARLRGEQLTLGYGKYTVAENLTVEIPDGHFTAIIGPNGCGKSTLLRTLSRLMTPAHGHVWLDGEHIQHYASKEVARRIGLLAQNATTPGDITVQELVARGRYPHQPLFTRWRKEDEEAVTKAMQATGITHLADQSVDTLSGGQRQRAWIAMVLAQETAIMLLDEPTTWLDISHQIDLLELLSELNREKGYTLAAVLHDLNQACRYASHLIALREGKIVAQGAPKEIVTAELIERIYGLRCMIIDDPVAGTPLVVPLGRTAPSTANS</sequence>
<evidence type="ECO:0000255" key="1">
    <source>
        <dbReference type="PROSITE-ProRule" id="PRU00434"/>
    </source>
</evidence>
<evidence type="ECO:0000269" key="2">
    <source>
    </source>
</evidence>
<evidence type="ECO:0000269" key="3">
    <source>
    </source>
</evidence>
<evidence type="ECO:0000269" key="4">
    <source>
    </source>
</evidence>
<evidence type="ECO:0000305" key="5"/>
<evidence type="ECO:0000305" key="6">
    <source>
    </source>
</evidence>
<evidence type="ECO:0000305" key="7">
    <source>
    </source>
</evidence>
<comment type="function">
    <text evidence="2 4 5">Part of the ABC transporter complex FepBDGC involved in ferric enterobactin uptake (PubMed:1838574, PubMed:3011753). Responsible for energy coupling to the transport system (Probable).</text>
</comment>
<comment type="catalytic activity">
    <reaction evidence="7">
        <text>Fe(III)-enterobactin(out) + ATP + H2O = Fe(III)-enterobactin(in) + ADP + phosphate + H(+)</text>
        <dbReference type="Rhea" id="RHEA:58492"/>
        <dbReference type="ChEBI" id="CHEBI:15377"/>
        <dbReference type="ChEBI" id="CHEBI:15378"/>
        <dbReference type="ChEBI" id="CHEBI:28199"/>
        <dbReference type="ChEBI" id="CHEBI:30616"/>
        <dbReference type="ChEBI" id="CHEBI:43474"/>
        <dbReference type="ChEBI" id="CHEBI:456216"/>
        <dbReference type="EC" id="7.2.2.17"/>
    </reaction>
    <physiologicalReaction direction="left-to-right" evidence="7">
        <dbReference type="Rhea" id="RHEA:58493"/>
    </physiologicalReaction>
</comment>
<comment type="subunit">
    <text evidence="6">The complex is composed of two ATP-binding proteins (FepC), two transmembrane proteins (FepD and FepG) and a solute-binding protein (FepB).</text>
</comment>
<comment type="subcellular location">
    <subcellularLocation>
        <location evidence="4">Cell inner membrane</location>
        <topology evidence="4">Peripheral membrane protein</topology>
    </subcellularLocation>
</comment>
<comment type="induction">
    <text evidence="2 3">Controlled in part by the amount of available iron (PubMed:1838574). Induced 1.5-fold by hydroxyurea (PubMed:20005847).</text>
</comment>
<comment type="similarity">
    <text evidence="5">Belongs to the ABC transporter superfamily.</text>
</comment>
<comment type="sequence caution" evidence="5">
    <conflict type="erroneous initiation">
        <sequence resource="EMBL-CDS" id="AAB40787"/>
    </conflict>
    <text>Extended N-terminus.</text>
</comment>
<name>FEPC_ECOLI</name>
<protein>
    <recommendedName>
        <fullName evidence="5">Ferric enterobactin transport ATP-binding protein FepC</fullName>
        <ecNumber evidence="7">7.2.2.17</ecNumber>
    </recommendedName>
</protein>
<organism>
    <name type="scientific">Escherichia coli (strain K12)</name>
    <dbReference type="NCBI Taxonomy" id="83333"/>
    <lineage>
        <taxon>Bacteria</taxon>
        <taxon>Pseudomonadati</taxon>
        <taxon>Pseudomonadota</taxon>
        <taxon>Gammaproteobacteria</taxon>
        <taxon>Enterobacterales</taxon>
        <taxon>Enterobacteriaceae</taxon>
        <taxon>Escherichia</taxon>
    </lineage>
</organism>